<comment type="function">
    <text evidence="13 14">Acts as a transcriptional activator which regulates the expression of several rod-specific genes, including RHO and PDE6B (PubMed:21981118). Also functions as a transcriptional coactivator, stimulating transcription mediated by the transcription factor CRX and NR2E3 (PubMed:17335001). Binds to the rhodopsin promoter in a sequence-specific manner (PubMed:17335001).</text>
</comment>
<comment type="subunit">
    <text evidence="1 6">Interacts with FIZ1; this interaction represses transactivation (By similarity). Interacts (via the leucine-zipper domain) with CRX (PubMed:10887186).</text>
</comment>
<comment type="interaction">
    <interactant intactId="EBI-8843813">
        <id>P54845</id>
    </interactant>
    <interactant intactId="EBI-8843794">
        <id>Q9XSK0</id>
        <label>CRX</label>
    </interactant>
    <organismsDiffer>true</organismsDiffer>
    <experiments>6</experiments>
</comment>
<comment type="interaction">
    <interactant intactId="EBI-9819090">
        <id>P54845-1</id>
    </interactant>
    <interactant intactId="EBI-748974">
        <id>Q96CV9</id>
        <label>OPTN</label>
    </interactant>
    <organismsDiffer>false</organismsDiffer>
    <experiments>6</experiments>
</comment>
<comment type="subcellular location">
    <subcellularLocation>
        <location evidence="8">Cytoplasm</location>
    </subcellularLocation>
    <subcellularLocation>
        <location evidence="8 13">Nucleus</location>
    </subcellularLocation>
</comment>
<comment type="alternative products">
    <event type="alternative splicing"/>
    <isoform>
        <id>P54845-1</id>
        <name>1</name>
        <sequence type="displayed"/>
    </isoform>
    <isoform>
        <id>P54845-2</id>
        <name>2</name>
        <sequence type="described" ref="VSP_055567"/>
    </isoform>
</comment>
<comment type="tissue specificity">
    <text evidence="8">Expressed in the brain and the retina (PubMed:11477108). Expressed strongly in rod and cone cells (at protein level) (PubMed:11477108).</text>
</comment>
<comment type="domain">
    <text evidence="10">The minimal transactivation domain (MTD) is conserved across the MAF family, it may activate transcription by recruiting TBP and associated factors at the promoters of target genes.</text>
</comment>
<comment type="PTM">
    <text evidence="8 13">Phosphorylated (PubMed:11477108, PubMed:17335001).</text>
</comment>
<comment type="PTM">
    <text evidence="2">Disumoylated at Lys-20. Sumoylation modulates the transcriptional activity of NRL on RHO and NR2E3 promoters, and is required for normal rod differentiation (By similarity).</text>
</comment>
<comment type="disease" evidence="5 7 9 11 12 13 14 15">
    <disease id="DI-00989">
        <name>Retinitis pigmentosa 27</name>
        <acronym>RP27</acronym>
        <description>A retinal dystrophy belonging to the group of pigmentary retinopathies. Retinitis pigmentosa is characterized by retinal pigment deposits visible on fundus examination and primary loss of rod photoreceptor cells followed by secondary loss of cone photoreceptors. Patients typically have night vision blindness and loss of midperipheral visual field. As their condition progresses, they lose their far peripheral visual field and eventually central vision as well.</description>
        <dbReference type="MIM" id="613750"/>
    </disease>
    <text>The disease is caused by variants affecting the gene represented in this entry.</text>
</comment>
<comment type="disease" evidence="11 13">
    <disease id="DI-03088">
        <name>Retinal degeneration autosomal recessive clumped pigment type</name>
        <acronym>RDCP</acronym>
        <description>A retinopathy characterized by night blindness since early childhood, consistent with a severe reduction in rod function. Color vision is normal although there is a relatively enhanced function of short-wavelength-sensitive cones in the macula. Signs of retinal degeneration and clusters of clumped pigment deposits in the peripheral fundus at the level of the retinal pigment epithelium are present.</description>
        <dbReference type="MIM" id="613750"/>
    </disease>
    <text>The disease is caused by variants affecting the gene represented in this entry.</text>
</comment>
<comment type="similarity">
    <text evidence="17">Belongs to the bZIP family.</text>
</comment>
<protein>
    <recommendedName>
        <fullName>Neural retina-specific leucine zipper protein</fullName>
        <shortName>NRL</shortName>
    </recommendedName>
</protein>
<organism>
    <name type="scientific">Homo sapiens</name>
    <name type="common">Human</name>
    <dbReference type="NCBI Taxonomy" id="9606"/>
    <lineage>
        <taxon>Eukaryota</taxon>
        <taxon>Metazoa</taxon>
        <taxon>Chordata</taxon>
        <taxon>Craniata</taxon>
        <taxon>Vertebrata</taxon>
        <taxon>Euteleostomi</taxon>
        <taxon>Mammalia</taxon>
        <taxon>Eutheria</taxon>
        <taxon>Euarchontoglires</taxon>
        <taxon>Primates</taxon>
        <taxon>Haplorrhini</taxon>
        <taxon>Catarrhini</taxon>
        <taxon>Hominidae</taxon>
        <taxon>Homo</taxon>
    </lineage>
</organism>
<evidence type="ECO:0000250" key="1"/>
<evidence type="ECO:0000250" key="2">
    <source>
        <dbReference type="UniProtKB" id="P54846"/>
    </source>
</evidence>
<evidence type="ECO:0000255" key="3">
    <source>
        <dbReference type="PROSITE-ProRule" id="PRU00978"/>
    </source>
</evidence>
<evidence type="ECO:0000256" key="4">
    <source>
        <dbReference type="SAM" id="MobiDB-lite"/>
    </source>
</evidence>
<evidence type="ECO:0000269" key="5">
    <source>
    </source>
</evidence>
<evidence type="ECO:0000269" key="6">
    <source>
    </source>
</evidence>
<evidence type="ECO:0000269" key="7">
    <source>
    </source>
</evidence>
<evidence type="ECO:0000269" key="8">
    <source>
    </source>
</evidence>
<evidence type="ECO:0000269" key="9">
    <source>
    </source>
</evidence>
<evidence type="ECO:0000269" key="10">
    <source>
    </source>
</evidence>
<evidence type="ECO:0000269" key="11">
    <source>
    </source>
</evidence>
<evidence type="ECO:0000269" key="12">
    <source>
    </source>
</evidence>
<evidence type="ECO:0000269" key="13">
    <source>
    </source>
</evidence>
<evidence type="ECO:0000269" key="14">
    <source>
    </source>
</evidence>
<evidence type="ECO:0000269" key="15">
    <source>
    </source>
</evidence>
<evidence type="ECO:0000303" key="16">
    <source>
    </source>
</evidence>
<evidence type="ECO:0000305" key="17"/>
<gene>
    <name type="primary">NRL</name>
    <name type="synonym">D14S46E</name>
</gene>
<name>NRL_HUMAN</name>
<accession>P54845</accession>
<accession>A8MX14</accession>
<accession>Q53XD0</accession>
<keyword id="KW-0010">Activator</keyword>
<keyword id="KW-0025">Alternative splicing</keyword>
<keyword id="KW-0963">Cytoplasm</keyword>
<keyword id="KW-0217">Developmental protein</keyword>
<keyword id="KW-0225">Disease variant</keyword>
<keyword id="KW-0238">DNA-binding</keyword>
<keyword id="KW-1017">Isopeptide bond</keyword>
<keyword id="KW-0539">Nucleus</keyword>
<keyword id="KW-1267">Proteomics identification</keyword>
<keyword id="KW-1185">Reference proteome</keyword>
<keyword id="KW-0682">Retinitis pigmentosa</keyword>
<keyword id="KW-0716">Sensory transduction</keyword>
<keyword id="KW-0804">Transcription</keyword>
<keyword id="KW-0805">Transcription regulation</keyword>
<keyword id="KW-0832">Ubl conjugation</keyword>
<keyword id="KW-0844">Vision</keyword>
<reference key="1">
    <citation type="journal article" date="1992" name="Proc. Natl. Acad. Sci. U.S.A.">
        <title>A conserved retina-specific gene encodes a basic motif/leucine zipper domain.</title>
        <authorList>
            <person name="Swaroop A."/>
            <person name="Xu J.Z."/>
            <person name="Pawar H."/>
            <person name="Jackson A.U."/>
            <person name="Skolnick C."/>
            <person name="Agarwal N."/>
        </authorList>
    </citation>
    <scope>NUCLEOTIDE SEQUENCE [MRNA] (ISOFORM 1)</scope>
    <source>
        <tissue>Retina</tissue>
    </source>
</reference>
<reference key="2">
    <citation type="submission" date="1993-10" db="EMBL/GenBank/DDBJ databases">
        <authorList>
            <person name="Jackson A.U."/>
            <person name="Skolnick C."/>
            <person name="Swaroop A."/>
        </authorList>
    </citation>
    <scope>NUCLEOTIDE SEQUENCE [MRNA] (ISOFORM 1)</scope>
    <source>
        <tissue>Retina</tissue>
    </source>
</reference>
<reference key="3">
    <citation type="journal article" date="1997" name="Genomics">
        <title>Human bZIP transcription factor gene NRL: structure, genomic sequence, and fine linkage mapping at 14q11.2 and negative mutation analysis in patients with retinal degeneration.</title>
        <authorList>
            <person name="Farjo Q."/>
            <person name="Jackson A.U."/>
            <person name="Pieke-Dahl S."/>
            <person name="Scott K."/>
            <person name="Kimberling W.J."/>
            <person name="Sieving P.A."/>
            <person name="Richards J.E."/>
            <person name="Swaroop A."/>
        </authorList>
    </citation>
    <scope>NUCLEOTIDE SEQUENCE [GENOMIC DNA]</scope>
</reference>
<reference key="4">
    <citation type="submission" date="2003-01" db="EMBL/GenBank/DDBJ databases">
        <title>Full-length cDNA libraries and normalization.</title>
        <authorList>
            <person name="Li W.B."/>
            <person name="Gruber C."/>
            <person name="Jessee J."/>
            <person name="Polayes D."/>
        </authorList>
    </citation>
    <scope>NUCLEOTIDE SEQUENCE [LARGE SCALE MRNA] (ISOFORM 1)</scope>
    <source>
        <tissue>B-cell</tissue>
        <tissue>Neuroblastoma</tissue>
    </source>
</reference>
<reference key="5">
    <citation type="submission" date="2003-05" db="EMBL/GenBank/DDBJ databases">
        <title>Cloning of human full-length CDSs in BD Creator(TM) system donor vector.</title>
        <authorList>
            <person name="Kalnine N."/>
            <person name="Chen X."/>
            <person name="Rolfs A."/>
            <person name="Halleck A."/>
            <person name="Hines L."/>
            <person name="Eisenstein S."/>
            <person name="Koundinya M."/>
            <person name="Raphael J."/>
            <person name="Moreira D."/>
            <person name="Kelley T."/>
            <person name="LaBaer J."/>
            <person name="Lin Y."/>
            <person name="Phelan M."/>
            <person name="Farmer A."/>
        </authorList>
    </citation>
    <scope>NUCLEOTIDE SEQUENCE [LARGE SCALE MRNA] (ISOFORM 1)</scope>
</reference>
<reference key="6">
    <citation type="journal article" date="2011" name="Invest. Ophthalmol. Vis. Sci.">
        <title>Full-length transcriptome analysis of human retina-derived cell lines ARPE-19 and Y79 using the vector-capping method.</title>
        <authorList>
            <person name="Oshikawa M."/>
            <person name="Tsutsui C."/>
            <person name="Ikegami T."/>
            <person name="Fuchida Y."/>
            <person name="Matsubara M."/>
            <person name="Toyama S."/>
            <person name="Usami R."/>
            <person name="Ohtoko K."/>
            <person name="Kato S."/>
        </authorList>
    </citation>
    <scope>NUCLEOTIDE SEQUENCE [LARGE SCALE MRNA] (ISOFORMS 1 AND 2)</scope>
    <source>
        <tissue>Retinoblastoma</tissue>
    </source>
</reference>
<reference key="7">
    <citation type="journal article" date="2003" name="Nature">
        <title>The DNA sequence and analysis of human chromosome 14.</title>
        <authorList>
            <person name="Heilig R."/>
            <person name="Eckenberg R."/>
            <person name="Petit J.-L."/>
            <person name="Fonknechten N."/>
            <person name="Da Silva C."/>
            <person name="Cattolico L."/>
            <person name="Levy M."/>
            <person name="Barbe V."/>
            <person name="De Berardinis V."/>
            <person name="Ureta-Vidal A."/>
            <person name="Pelletier E."/>
            <person name="Vico V."/>
            <person name="Anthouard V."/>
            <person name="Rowen L."/>
            <person name="Madan A."/>
            <person name="Qin S."/>
            <person name="Sun H."/>
            <person name="Du H."/>
            <person name="Pepin K."/>
            <person name="Artiguenave F."/>
            <person name="Robert C."/>
            <person name="Cruaud C."/>
            <person name="Bruels T."/>
            <person name="Jaillon O."/>
            <person name="Friedlander L."/>
            <person name="Samson G."/>
            <person name="Brottier P."/>
            <person name="Cure S."/>
            <person name="Segurens B."/>
            <person name="Aniere F."/>
            <person name="Samain S."/>
            <person name="Crespeau H."/>
            <person name="Abbasi N."/>
            <person name="Aiach N."/>
            <person name="Boscus D."/>
            <person name="Dickhoff R."/>
            <person name="Dors M."/>
            <person name="Dubois I."/>
            <person name="Friedman C."/>
            <person name="Gouyvenoux M."/>
            <person name="James R."/>
            <person name="Madan A."/>
            <person name="Mairey-Estrada B."/>
            <person name="Mangenot S."/>
            <person name="Martins N."/>
            <person name="Menard M."/>
            <person name="Oztas S."/>
            <person name="Ratcliffe A."/>
            <person name="Shaffer T."/>
            <person name="Trask B."/>
            <person name="Vacherie B."/>
            <person name="Bellemere C."/>
            <person name="Belser C."/>
            <person name="Besnard-Gonnet M."/>
            <person name="Bartol-Mavel D."/>
            <person name="Boutard M."/>
            <person name="Briez-Silla S."/>
            <person name="Combette S."/>
            <person name="Dufosse-Laurent V."/>
            <person name="Ferron C."/>
            <person name="Lechaplais C."/>
            <person name="Louesse C."/>
            <person name="Muselet D."/>
            <person name="Magdelenat G."/>
            <person name="Pateau E."/>
            <person name="Petit E."/>
            <person name="Sirvain-Trukniewicz P."/>
            <person name="Trybou A."/>
            <person name="Vega-Czarny N."/>
            <person name="Bataille E."/>
            <person name="Bluet E."/>
            <person name="Bordelais I."/>
            <person name="Dubois M."/>
            <person name="Dumont C."/>
            <person name="Guerin T."/>
            <person name="Haffray S."/>
            <person name="Hammadi R."/>
            <person name="Muanga J."/>
            <person name="Pellouin V."/>
            <person name="Robert D."/>
            <person name="Wunderle E."/>
            <person name="Gauguet G."/>
            <person name="Roy A."/>
            <person name="Sainte-Marthe L."/>
            <person name="Verdier J."/>
            <person name="Verdier-Discala C."/>
            <person name="Hillier L.W."/>
            <person name="Fulton L."/>
            <person name="McPherson J."/>
            <person name="Matsuda F."/>
            <person name="Wilson R."/>
            <person name="Scarpelli C."/>
            <person name="Gyapay G."/>
            <person name="Wincker P."/>
            <person name="Saurin W."/>
            <person name="Quetier F."/>
            <person name="Waterston R."/>
            <person name="Hood L."/>
            <person name="Weissenbach J."/>
        </authorList>
    </citation>
    <scope>NUCLEOTIDE SEQUENCE [LARGE SCALE GENOMIC DNA]</scope>
</reference>
<reference key="8">
    <citation type="submission" date="2005-09" db="EMBL/GenBank/DDBJ databases">
        <authorList>
            <person name="Mural R.J."/>
            <person name="Istrail S."/>
            <person name="Sutton G.G."/>
            <person name="Florea L."/>
            <person name="Halpern A.L."/>
            <person name="Mobarry C.M."/>
            <person name="Lippert R."/>
            <person name="Walenz B."/>
            <person name="Shatkay H."/>
            <person name="Dew I."/>
            <person name="Miller J.R."/>
            <person name="Flanigan M.J."/>
            <person name="Edwards N.J."/>
            <person name="Bolanos R."/>
            <person name="Fasulo D."/>
            <person name="Halldorsson B.V."/>
            <person name="Hannenhalli S."/>
            <person name="Turner R."/>
            <person name="Yooseph S."/>
            <person name="Lu F."/>
            <person name="Nusskern D.R."/>
            <person name="Shue B.C."/>
            <person name="Zheng X.H."/>
            <person name="Zhong F."/>
            <person name="Delcher A.L."/>
            <person name="Huson D.H."/>
            <person name="Kravitz S.A."/>
            <person name="Mouchard L."/>
            <person name="Reinert K."/>
            <person name="Remington K.A."/>
            <person name="Clark A.G."/>
            <person name="Waterman M.S."/>
            <person name="Eichler E.E."/>
            <person name="Adams M.D."/>
            <person name="Hunkapiller M.W."/>
            <person name="Myers E.W."/>
            <person name="Venter J.C."/>
        </authorList>
    </citation>
    <scope>NUCLEOTIDE SEQUENCE [LARGE SCALE GENOMIC DNA]</scope>
</reference>
<reference key="9">
    <citation type="journal article" date="2004" name="Genome Res.">
        <title>The status, quality, and expansion of the NIH full-length cDNA project: the Mammalian Gene Collection (MGC).</title>
        <authorList>
            <consortium name="The MGC Project Team"/>
        </authorList>
    </citation>
    <scope>NUCLEOTIDE SEQUENCE [LARGE SCALE MRNA] (ISOFORM 1)</scope>
    <source>
        <tissue>Eye</tissue>
    </source>
</reference>
<reference key="10">
    <citation type="journal article" date="2000" name="J. Biol. Chem.">
        <title>The leucine zipper of NRL interacts with the CRX homeodomain. A possible mechanism of transcriptional synergy in rhodopsin regulation.</title>
        <authorList>
            <person name="Mitton K.P."/>
            <person name="Swain P.K."/>
            <person name="Chen S."/>
            <person name="Xu S."/>
            <person name="Zack D.J."/>
            <person name="Swaroop A."/>
        </authorList>
    </citation>
    <scope>INTERACTION WITH CRX</scope>
</reference>
<reference key="11">
    <citation type="journal article" date="2001" name="J. Biol. Chem.">
        <title>Multiple phosphorylated isoforms of NRL are expressed in rod photoreceptors.</title>
        <authorList>
            <person name="Swain P.K."/>
            <person name="Hicks D."/>
            <person name="Mears A.J."/>
            <person name="Apel I.J."/>
            <person name="Smith J.E."/>
            <person name="John S.K."/>
            <person name="Hendrickson A."/>
            <person name="Milam A.H."/>
            <person name="Swaroop A."/>
        </authorList>
    </citation>
    <scope>PHOSPHORYLATION</scope>
    <scope>SUBCELLULAR LOCATION</scope>
    <scope>TISSUE SPECIFICITY</scope>
</reference>
<reference key="12">
    <citation type="journal article" date="2004" name="J. Biol. Chem.">
        <title>The minimal transactivation domain of the basic motif-leucine zipper transcription factor NRL interacts with TATA-binding protein.</title>
        <authorList>
            <person name="Friedman J.S."/>
            <person name="Khanna H."/>
            <person name="Swain P.K."/>
            <person name="Denicola R."/>
            <person name="Cheng H."/>
            <person name="Mitton K.P."/>
            <person name="Weber C.H."/>
            <person name="Hicks D."/>
            <person name="Swaroop A."/>
        </authorList>
    </citation>
    <scope>DOMAIN MINIMAL TRANSACTIVATION DOMAIN</scope>
</reference>
<reference key="13">
    <citation type="journal article" date="1999" name="Nat. Genet.">
        <title>A mutation in NRL is associated with autosomal dominant retinitis pigmentosa.</title>
        <authorList>
            <person name="Bessant D.A.R."/>
            <person name="Payne A.M."/>
            <person name="Mitton K.P."/>
            <person name="Wang Q.-L."/>
            <person name="Swain P.K."/>
            <person name="Plant C."/>
            <person name="Bird A.C."/>
            <person name="Zack D.J."/>
            <person name="Swaroop A."/>
            <person name="Bhattacharya S.S."/>
        </authorList>
    </citation>
    <scope>VARIANT RP27 THR-50</scope>
</reference>
<reference key="14">
    <citation type="journal article" date="2001" name="Hum. Mutat.">
        <title>Mutations P51U and G122E in retinal transcription factor NRL associated with autosomal dominant and sporadic retinitis pigmentosa.</title>
        <authorList>
            <person name="Martinez-Gimeno M."/>
            <person name="Maseras M."/>
            <person name="Baiget M."/>
            <person name="Beneito M."/>
            <person name="Antinolo G."/>
            <person name="Ayuso C."/>
            <person name="Carballo M."/>
        </authorList>
    </citation>
    <scope>VARIANTS RP27 LEU-51 AND GLU-122</scope>
    <scope>INVOLVEMENT IN RP27</scope>
</reference>
<reference key="15">
    <citation type="journal article" date="2002" name="Arch. Ophthalmol.">
        <title>Novel mutations in the NRL gene and associated clinical findings in patients with dominant retinitis pigmentosa.</title>
        <authorList>
            <person name="DeAngelis M.M."/>
            <person name="Grimsby J.L."/>
            <person name="Sandberg M.A."/>
            <person name="Berson E.L."/>
            <person name="Dryja T.P."/>
        </authorList>
    </citation>
    <scope>VARIANTS RP27 LEU-50; PRO-50 AND THR-51</scope>
</reference>
<reference key="16">
    <citation type="journal article" date="2004" name="Proc. Natl. Acad. Sci. U.S.A.">
        <title>Recessive NRL mutations in patients with clumped pigmentary retinal degeneration and relative preservation of blue cone function.</title>
        <authorList>
            <person name="Nishiguchi K.M."/>
            <person name="Friedman J.S."/>
            <person name="Sandberg M.A."/>
            <person name="Swaroop A."/>
            <person name="Berson E.L."/>
            <person name="Dryja T.P."/>
        </authorList>
    </citation>
    <scope>VARIANTS RDCP VAL-76 AND PRO-160</scope>
    <scope>CHARACTERIZATION OF VARIANT RDCP PRO-160</scope>
    <scope>VARIANT RP27 SER-51</scope>
    <scope>VARIANT GLN-125</scope>
</reference>
<reference key="17">
    <citation type="journal article" date="2005" name="J. Med. Genet.">
        <title>Molecular genetics of autosomal dominant retinitis pigmentosa (ADRP): a comprehensive study of 43 Italian families.</title>
        <authorList>
            <person name="Ziviello C."/>
            <person name="Simonelli F."/>
            <person name="Testa F."/>
            <person name="Anastasi M."/>
            <person name="Marzoli S.B."/>
            <person name="Falsini B."/>
            <person name="Ghiglione D."/>
            <person name="Macaluso C."/>
            <person name="Manitto M.P."/>
            <person name="Garre C."/>
            <person name="Ciccodicola A."/>
            <person name="Rinaldi E."/>
            <person name="Banfi S."/>
        </authorList>
    </citation>
    <scope>VARIANT RP27 LEU-51</scope>
    <scope>VARIANT SER-67</scope>
</reference>
<reference key="18">
    <citation type="journal article" date="2012" name="Hum. Mutat.">
        <title>Next-generation genetic testing for retinitis pigmentosa.</title>
        <authorList>
            <person name="Neveling K."/>
            <person name="Collin R.W."/>
            <person name="Gilissen C."/>
            <person name="van Huet R.A."/>
            <person name="Visser L."/>
            <person name="Kwint M.P."/>
            <person name="Gijsen S.J."/>
            <person name="Zonneveld M.N."/>
            <person name="Wieskamp N."/>
            <person name="de Ligt J."/>
            <person name="Siemiatkowska A.M."/>
            <person name="Hoefsloot L.H."/>
            <person name="Buckley M.F."/>
            <person name="Kellner U."/>
            <person name="Branham K.E."/>
            <person name="den Hollander A.I."/>
            <person name="Hoischen A."/>
            <person name="Hoyng C."/>
            <person name="Klevering B.J."/>
            <person name="van den Born L.I."/>
            <person name="Veltman J.A."/>
            <person name="Cremers F.P."/>
            <person name="Scheffer H."/>
        </authorList>
    </citation>
    <scope>VARIANT RP27 SER-170</scope>
</reference>
<reference key="19">
    <citation type="journal article" date="2007" name="Hum. Mutat.">
        <title>Retinopathy mutations in the bZIP protein NRL alter phosphorylation and transcriptional activity.</title>
        <authorList>
            <person name="Kanda A."/>
            <person name="Friedman J.S."/>
            <person name="Nishiguchi K.M."/>
            <person name="Swaroop A."/>
        </authorList>
    </citation>
    <scope>CHARACTERIZATION OF VARIANTS RP27 LEU-50; PRO-50; THR-50; LEU-51; SER-51; THR-51; SER-67 AND GLU-122</scope>
    <scope>CHARACTERIZATION OF VARIANTS RDCP VAL-76 AND PRO-160</scope>
    <scope>CHARACTERIZATION OF VARIANT GLN-125</scope>
    <scope>FUNCTION</scope>
    <scope>DNA-BINDING</scope>
    <scope>SUBCELLULAR LOCATION</scope>
    <scope>PHOSPHORYLATION</scope>
</reference>
<reference key="20">
    <citation type="journal article" date="2012" name="Clin. Genet.">
        <title>Novel p.M96T variant of NRL and shRNA-based suppression and replacement of NRL mutants associated with autosomal dominant retinitis pigmentosa.</title>
        <authorList>
            <person name="Hernan I."/>
            <person name="Gamundi M.J."/>
            <person name="Borras E."/>
            <person name="Maseras M."/>
            <person name="Garcia-Sandoval B."/>
            <person name="Blanco-Kelly F."/>
            <person name="Ayuso C."/>
            <person name="Carballo M."/>
        </authorList>
    </citation>
    <scope>VARIANT RP27 THR-96</scope>
    <scope>CHARACTERIZATION OF VARIANTS RP27 THR-50; LEU-51 AND THR-96</scope>
    <scope>FUNCTION</scope>
</reference>
<proteinExistence type="evidence at protein level"/>
<feature type="chain" id="PRO_0000076633" description="Neural retina-specific leucine zipper protein">
    <location>
        <begin position="1"/>
        <end position="237"/>
    </location>
</feature>
<feature type="domain" description="bZIP" evidence="3">
    <location>
        <begin position="159"/>
        <end position="222"/>
    </location>
</feature>
<feature type="region of interest" description="Disordered" evidence="4">
    <location>
        <begin position="23"/>
        <end position="57"/>
    </location>
</feature>
<feature type="region of interest" description="Minimal transactivation domain (MTD)" evidence="10">
    <location>
        <begin position="30"/>
        <end position="93"/>
    </location>
</feature>
<feature type="region of interest" description="Basic motif" evidence="3">
    <location>
        <begin position="159"/>
        <end position="185"/>
    </location>
</feature>
<feature type="region of interest" description="Leucine-zipper" evidence="3">
    <location>
        <begin position="187"/>
        <end position="208"/>
    </location>
</feature>
<feature type="cross-link" description="Glycyl lysine isopeptide (Lys-Gly) (interchain with G-Cter in SUMO)" evidence="1">
    <location>
        <position position="20"/>
    </location>
</feature>
<feature type="cross-link" description="Glycyl lysine isopeptide (Lys-Gly) (interchain with G-Cter in SUMO)" evidence="1">
    <location>
        <position position="24"/>
    </location>
</feature>
<feature type="splice variant" id="VSP_055567" description="In isoform 2." evidence="16">
    <location>
        <begin position="1"/>
        <end position="139"/>
    </location>
</feature>
<feature type="sequence variant" id="VAR_079382" description="In RP27; decreases phosphorylation; no effect on subcellular localization; increased transcriptional coactivator activity." evidence="9 13">
    <original>S</original>
    <variation>L</variation>
    <location>
        <position position="50"/>
    </location>
</feature>
<feature type="sequence variant" id="VAR_079383" description="In RP27; decreases phosphorylation; no effect on subcellular localization; increased transcriptional coactivator activity." evidence="9 13">
    <original>S</original>
    <variation>P</variation>
    <location>
        <position position="50"/>
    </location>
</feature>
<feature type="sequence variant" id="VAR_009268" description="In RP27; decreases phosphorylation; no effect on subcellular localization; increased transactivational activity; increased transcriptional coactivator activity; dbSNP:rs104894459." evidence="5 13 14">
    <original>S</original>
    <variation>T</variation>
    <location>
        <position position="50"/>
    </location>
</feature>
<feature type="sequence variant" id="VAR_079384" description="In RP27; decreases phosphorylation; no effect on subcellular localization; increased transcriptional coactivator activity." evidence="7 12 13 14">
    <original>P</original>
    <variation>L</variation>
    <location>
        <position position="51"/>
    </location>
</feature>
<feature type="sequence variant" id="VAR_079385" description="In RP27; decreases phosphorylation; no effect on subcellular localization; increased transcriptional coactivator activity; dbSNP:rs794727281." evidence="11 13">
    <original>P</original>
    <variation>S</variation>
    <location>
        <position position="51"/>
    </location>
</feature>
<feature type="sequence variant" id="VAR_079386" description="In RP27; autosomal dominant; decreases phosphorylation; no effect on subcellular localization; increased transcriptional coactivator activity." evidence="9 13">
    <original>P</original>
    <variation>T</variation>
    <location>
        <position position="51"/>
    </location>
</feature>
<feature type="sequence variant" id="VAR_079387" description="In RP27; no effect on phosphorylation; no effect on subcellular localization; no effect on transcriptional coactivator activity; dbSNP:rs199691910." evidence="12 13">
    <original>P</original>
    <variation>S</variation>
    <location>
        <position position="67"/>
    </location>
</feature>
<feature type="sequence variant" id="VAR_079388" description="In RDCP; uncertain significance; alters phosphorylation; no effect on subcellular localization; no effect on transcriptional coactivator activity; dbSNP:rs149921817." evidence="11 13">
    <original>A</original>
    <variation>V</variation>
    <location>
        <position position="76"/>
    </location>
</feature>
<feature type="sequence variant" id="VAR_079389" description="In RP27; increased transactivational activity; dbSNP:rs397514516." evidence="14">
    <original>M</original>
    <variation>T</variation>
    <location>
        <position position="96"/>
    </location>
</feature>
<feature type="sequence variant" id="VAR_079390" description="In RP27; uncertain significance; alters phosphorylation; no effect on subcellular localization; no effect on transcriptional coactivator activity; dbSNP:rs757038765." evidence="7 13">
    <original>G</original>
    <variation>E</variation>
    <location>
        <position position="122"/>
    </location>
</feature>
<feature type="sequence variant" id="VAR_079391" description="Found in a patient with atypical retinitis pigmentosa and a patient with cone dysfunction; uncertain significance; no effect on phosphorylation; no effect on subcellular localization; dbSNP:rs201970559." evidence="11 13">
    <original>H</original>
    <variation>Q</variation>
    <location>
        <position position="125"/>
    </location>
</feature>
<feature type="sequence variant" id="VAR_064977" description="In RDCP; alters phosphorylation; no effect on subcellular localization; loss of transcriptional coactivator activity; dbSNP:rs104894463." evidence="11 13">
    <original>L</original>
    <variation>P</variation>
    <location>
        <position position="160"/>
    </location>
</feature>
<feature type="sequence variant" id="VAR_068364" description="In RP27; dbSNP:rs1173385399." evidence="15">
    <original>R</original>
    <variation>S</variation>
    <location>
        <position position="170"/>
    </location>
</feature>
<sequence length="237" mass="25940">MALPPSPLAMEYVNDFDLMKFEVKREPSEGRPGPPTASLGSTPYSSVPPSPTFSEPGMVGATEGTRPGLEELYWLATLQQQLGAGEALGLSPEEAMELLQGQGPVPVDGPHGYYPGSPEETGAQHVQLAERFSDAALVSMSVRELNRQLRGCGRDEALRLKQRRRTLKNRGYAQACRSKRLQQRRGLEAERARLAAQLDALRAEVARLARERDLYKARCDRLTSSGPGSGDPSHLFL</sequence>
<dbReference type="EMBL" id="M95925">
    <property type="protein sequence ID" value="AAA96828.1"/>
    <property type="molecule type" value="mRNA"/>
</dbReference>
<dbReference type="EMBL" id="M81840">
    <property type="protein sequence ID" value="AAA59948.1"/>
    <property type="molecule type" value="mRNA"/>
</dbReference>
<dbReference type="EMBL" id="U95012">
    <property type="protein sequence ID" value="AAB82768.1"/>
    <property type="molecule type" value="Genomic_DNA"/>
</dbReference>
<dbReference type="EMBL" id="BX161381">
    <property type="protein sequence ID" value="CAD61873.1"/>
    <property type="molecule type" value="mRNA"/>
</dbReference>
<dbReference type="EMBL" id="BX161522">
    <property type="protein sequence ID" value="CAD61954.1"/>
    <property type="molecule type" value="mRNA"/>
</dbReference>
<dbReference type="EMBL" id="AB593101">
    <property type="protein sequence ID" value="BAJ84041.1"/>
    <property type="molecule type" value="mRNA"/>
</dbReference>
<dbReference type="EMBL" id="AB593102">
    <property type="protein sequence ID" value="BAJ84042.1"/>
    <property type="molecule type" value="mRNA"/>
</dbReference>
<dbReference type="EMBL" id="AB593103">
    <property type="protein sequence ID" value="BAJ84043.1"/>
    <property type="molecule type" value="mRNA"/>
</dbReference>
<dbReference type="EMBL" id="AB593104">
    <property type="protein sequence ID" value="BAJ84044.1"/>
    <property type="molecule type" value="mRNA"/>
</dbReference>
<dbReference type="EMBL" id="AB593105">
    <property type="protein sequence ID" value="BAJ84045.1"/>
    <property type="molecule type" value="mRNA"/>
</dbReference>
<dbReference type="EMBL" id="AB593106">
    <property type="protein sequence ID" value="BAJ84046.1"/>
    <property type="molecule type" value="mRNA"/>
</dbReference>
<dbReference type="EMBL" id="BT006942">
    <property type="protein sequence ID" value="AAP35588.1"/>
    <property type="molecule type" value="mRNA"/>
</dbReference>
<dbReference type="EMBL" id="AL136295">
    <property type="status" value="NOT_ANNOTATED_CDS"/>
    <property type="molecule type" value="Genomic_DNA"/>
</dbReference>
<dbReference type="EMBL" id="CH471078">
    <property type="protein sequence ID" value="EAW66116.1"/>
    <property type="molecule type" value="Genomic_DNA"/>
</dbReference>
<dbReference type="EMBL" id="BC012395">
    <property type="protein sequence ID" value="AAH12395.1"/>
    <property type="molecule type" value="mRNA"/>
</dbReference>
<dbReference type="CCDS" id="CCDS9608.1">
    <molecule id="P54845-1"/>
</dbReference>
<dbReference type="PIR" id="A41796">
    <property type="entry name" value="A41796"/>
</dbReference>
<dbReference type="RefSeq" id="NP_001341697.1">
    <molecule id="P54845-1"/>
    <property type="nucleotide sequence ID" value="NM_001354768.3"/>
</dbReference>
<dbReference type="RefSeq" id="NP_001341698.1">
    <molecule id="P54845-1"/>
    <property type="nucleotide sequence ID" value="NM_001354769.1"/>
</dbReference>
<dbReference type="RefSeq" id="NP_006168.1">
    <molecule id="P54845-1"/>
    <property type="nucleotide sequence ID" value="NM_006177.5"/>
</dbReference>
<dbReference type="RefSeq" id="XP_005267765.1">
    <property type="nucleotide sequence ID" value="XM_005267708.4"/>
</dbReference>
<dbReference type="RefSeq" id="XP_005267766.1">
    <property type="nucleotide sequence ID" value="XM_005267709.3"/>
</dbReference>
<dbReference type="RefSeq" id="XP_005267767.1">
    <property type="nucleotide sequence ID" value="XM_005267710.3"/>
</dbReference>
<dbReference type="RefSeq" id="XP_011535104.1">
    <property type="nucleotide sequence ID" value="XM_011536802.1"/>
</dbReference>
<dbReference type="RefSeq" id="XP_011535106.1">
    <property type="nucleotide sequence ID" value="XM_011536804.2"/>
</dbReference>
<dbReference type="RefSeq" id="XP_011535107.1">
    <molecule id="P54845-1"/>
    <property type="nucleotide sequence ID" value="XM_011536805.3"/>
</dbReference>
<dbReference type="RefSeq" id="XP_054188316.1">
    <molecule id="P54845-1"/>
    <property type="nucleotide sequence ID" value="XM_054332341.1"/>
</dbReference>
<dbReference type="RefSeq" id="XP_054188317.1">
    <molecule id="P54845-1"/>
    <property type="nucleotide sequence ID" value="XM_054332342.1"/>
</dbReference>
<dbReference type="RefSeq" id="XP_054188318.1">
    <molecule id="P54845-1"/>
    <property type="nucleotide sequence ID" value="XM_054332343.1"/>
</dbReference>
<dbReference type="RefSeq" id="XP_054188319.1">
    <molecule id="P54845-1"/>
    <property type="nucleotide sequence ID" value="XM_054332344.1"/>
</dbReference>
<dbReference type="RefSeq" id="XP_054232123.1">
    <molecule id="P54845-1"/>
    <property type="nucleotide sequence ID" value="XM_054376148.1"/>
</dbReference>
<dbReference type="RefSeq" id="XP_054232124.1">
    <molecule id="P54845-1"/>
    <property type="nucleotide sequence ID" value="XM_054376149.1"/>
</dbReference>
<dbReference type="RefSeq" id="XP_054232125.1">
    <molecule id="P54845-1"/>
    <property type="nucleotide sequence ID" value="XM_054376150.1"/>
</dbReference>
<dbReference type="RefSeq" id="XP_054232126.1">
    <molecule id="P54845-1"/>
    <property type="nucleotide sequence ID" value="XM_054376151.1"/>
</dbReference>
<dbReference type="SMR" id="P54845"/>
<dbReference type="BioGRID" id="110957">
    <property type="interactions" value="10"/>
</dbReference>
<dbReference type="ELM" id="P54845"/>
<dbReference type="FunCoup" id="P54845">
    <property type="interactions" value="590"/>
</dbReference>
<dbReference type="IntAct" id="P54845">
    <property type="interactions" value="3"/>
</dbReference>
<dbReference type="STRING" id="9606.ENSP00000454062"/>
<dbReference type="iPTMnet" id="P54845"/>
<dbReference type="PhosphoSitePlus" id="P54845"/>
<dbReference type="BioMuta" id="NRL"/>
<dbReference type="MassIVE" id="P54845"/>
<dbReference type="PaxDb" id="9606-ENSP00000454062"/>
<dbReference type="PeptideAtlas" id="P54845"/>
<dbReference type="ProteomicsDB" id="2286"/>
<dbReference type="ProteomicsDB" id="56738">
    <molecule id="P54845-1"/>
</dbReference>
<dbReference type="Antibodypedia" id="22607">
    <property type="antibodies" value="115 antibodies from 26 providers"/>
</dbReference>
<dbReference type="DNASU" id="4901"/>
<dbReference type="Ensembl" id="ENST00000396995.1">
    <molecule id="P54845-2"/>
    <property type="protein sequence ID" value="ENSP00000380191.1"/>
    <property type="gene ID" value="ENSG00000129535.13"/>
</dbReference>
<dbReference type="Ensembl" id="ENST00000396997.1">
    <molecule id="P54845-1"/>
    <property type="protein sequence ID" value="ENSP00000380193.1"/>
    <property type="gene ID" value="ENSG00000129535.13"/>
</dbReference>
<dbReference type="Ensembl" id="ENST00000397002.6">
    <molecule id="P54845-1"/>
    <property type="protein sequence ID" value="ENSP00000380197.2"/>
    <property type="gene ID" value="ENSG00000129535.13"/>
</dbReference>
<dbReference type="Ensembl" id="ENST00000560550.1">
    <molecule id="P54845-2"/>
    <property type="protein sequence ID" value="ENSP00000452966.1"/>
    <property type="gene ID" value="ENSG00000129535.13"/>
</dbReference>
<dbReference type="Ensembl" id="ENST00000561028.6">
    <molecule id="P54845-1"/>
    <property type="protein sequence ID" value="ENSP00000454062.2"/>
    <property type="gene ID" value="ENSG00000129535.13"/>
</dbReference>
<dbReference type="Ensembl" id="ENST00000642485.1">
    <molecule id="P54845-2"/>
    <property type="protein sequence ID" value="ENSP00000494928.1"/>
    <property type="gene ID" value="ENSG00000285493.3"/>
</dbReference>
<dbReference type="Ensembl" id="ENST00000643394.1">
    <molecule id="P54845-1"/>
    <property type="protein sequence ID" value="ENSP00000495627.1"/>
    <property type="gene ID" value="ENSG00000285493.3"/>
</dbReference>
<dbReference type="Ensembl" id="ENST00000645740.1">
    <molecule id="P54845-2"/>
    <property type="protein sequence ID" value="ENSP00000495155.1"/>
    <property type="gene ID" value="ENSG00000285493.3"/>
</dbReference>
<dbReference type="Ensembl" id="ENST00000646526.3">
    <molecule id="P54845-1"/>
    <property type="protein sequence ID" value="ENSP00000496316.1"/>
    <property type="gene ID" value="ENSG00000285493.3"/>
</dbReference>
<dbReference type="Ensembl" id="ENST00000647376.1">
    <molecule id="P54845-1"/>
    <property type="protein sequence ID" value="ENSP00000496275.1"/>
    <property type="gene ID" value="ENSG00000285493.3"/>
</dbReference>
<dbReference type="GeneID" id="4901"/>
<dbReference type="KEGG" id="hsa:4901"/>
<dbReference type="MANE-Select" id="ENST00000561028.6">
    <property type="protein sequence ID" value="ENSP00000454062.2"/>
    <property type="RefSeq nucleotide sequence ID" value="NM_001354768.3"/>
    <property type="RefSeq protein sequence ID" value="NP_001341697.1"/>
</dbReference>
<dbReference type="UCSC" id="uc001wlo.4">
    <molecule id="P54845-1"/>
    <property type="organism name" value="human"/>
</dbReference>
<dbReference type="AGR" id="HGNC:8002"/>
<dbReference type="CTD" id="4901"/>
<dbReference type="DisGeNET" id="4901"/>
<dbReference type="GeneCards" id="NRL"/>
<dbReference type="GeneReviews" id="NRL"/>
<dbReference type="HGNC" id="HGNC:8002">
    <property type="gene designation" value="NRL"/>
</dbReference>
<dbReference type="HPA" id="ENSG00000129535">
    <property type="expression patterns" value="Tissue enriched (retina)"/>
</dbReference>
<dbReference type="MalaCards" id="NRL"/>
<dbReference type="MIM" id="162080">
    <property type="type" value="gene"/>
</dbReference>
<dbReference type="MIM" id="613750">
    <property type="type" value="phenotype"/>
</dbReference>
<dbReference type="neXtProt" id="NX_P54845"/>
<dbReference type="OpenTargets" id="ENSG00000129535"/>
<dbReference type="Orphanet" id="791">
    <property type="disease" value="Retinitis pigmentosa"/>
</dbReference>
<dbReference type="PharmGKB" id="PA31781"/>
<dbReference type="VEuPathDB" id="HostDB:ENSG00000129535"/>
<dbReference type="eggNOG" id="KOG4196">
    <property type="taxonomic scope" value="Eukaryota"/>
</dbReference>
<dbReference type="GeneTree" id="ENSGT00940000161862"/>
<dbReference type="HOGENOM" id="CLU_063062_0_0_1"/>
<dbReference type="InParanoid" id="P54845"/>
<dbReference type="OMA" id="SGDHAHF"/>
<dbReference type="OrthoDB" id="5974330at2759"/>
<dbReference type="PAN-GO" id="P54845">
    <property type="GO annotations" value="5 GO annotations based on evolutionary models"/>
</dbReference>
<dbReference type="PhylomeDB" id="P54845"/>
<dbReference type="TreeFam" id="TF325689"/>
<dbReference type="PathwayCommons" id="P54845"/>
<dbReference type="SignaLink" id="P54845"/>
<dbReference type="SIGNOR" id="P54845"/>
<dbReference type="BioGRID-ORCS" id="4901">
    <property type="hits" value="16 hits in 1168 CRISPR screens"/>
</dbReference>
<dbReference type="ChiTaRS" id="NRL">
    <property type="organism name" value="human"/>
</dbReference>
<dbReference type="GeneWiki" id="NRL_(gene)"/>
<dbReference type="GenomeRNAi" id="4901"/>
<dbReference type="Pharos" id="P54845">
    <property type="development level" value="Tbio"/>
</dbReference>
<dbReference type="PRO" id="PR:P54845"/>
<dbReference type="Proteomes" id="UP000005640">
    <property type="component" value="Chromosome 14"/>
</dbReference>
<dbReference type="RNAct" id="P54845">
    <property type="molecule type" value="protein"/>
</dbReference>
<dbReference type="Bgee" id="ENSG00000129535">
    <property type="expression patterns" value="Expressed in male germ line stem cell (sensu Vertebrata) in testis and 94 other cell types or tissues"/>
</dbReference>
<dbReference type="ExpressionAtlas" id="P54845">
    <property type="expression patterns" value="baseline and differential"/>
</dbReference>
<dbReference type="GO" id="GO:0000785">
    <property type="term" value="C:chromatin"/>
    <property type="evidence" value="ECO:0000247"/>
    <property type="project" value="NTNU_SB"/>
</dbReference>
<dbReference type="GO" id="GO:0005737">
    <property type="term" value="C:cytoplasm"/>
    <property type="evidence" value="ECO:0000314"/>
    <property type="project" value="UniProtKB"/>
</dbReference>
<dbReference type="GO" id="GO:0005829">
    <property type="term" value="C:cytosol"/>
    <property type="evidence" value="ECO:0000314"/>
    <property type="project" value="HPA"/>
</dbReference>
<dbReference type="GO" id="GO:0005654">
    <property type="term" value="C:nucleoplasm"/>
    <property type="evidence" value="ECO:0000314"/>
    <property type="project" value="HPA"/>
</dbReference>
<dbReference type="GO" id="GO:0005634">
    <property type="term" value="C:nucleus"/>
    <property type="evidence" value="ECO:0000314"/>
    <property type="project" value="UniProtKB"/>
</dbReference>
<dbReference type="GO" id="GO:0003677">
    <property type="term" value="F:DNA binding"/>
    <property type="evidence" value="ECO:0000304"/>
    <property type="project" value="ProtInc"/>
</dbReference>
<dbReference type="GO" id="GO:0001228">
    <property type="term" value="F:DNA-binding transcription activator activity, RNA polymerase II-specific"/>
    <property type="evidence" value="ECO:0000314"/>
    <property type="project" value="NTNU_SB"/>
</dbReference>
<dbReference type="GO" id="GO:0000981">
    <property type="term" value="F:DNA-binding transcription factor activity, RNA polymerase II-specific"/>
    <property type="evidence" value="ECO:0000247"/>
    <property type="project" value="NTNU_SB"/>
</dbReference>
<dbReference type="GO" id="GO:0043522">
    <property type="term" value="F:leucine zipper domain binding"/>
    <property type="evidence" value="ECO:0000353"/>
    <property type="project" value="UniProtKB"/>
</dbReference>
<dbReference type="GO" id="GO:1990841">
    <property type="term" value="F:promoter-specific chromatin binding"/>
    <property type="evidence" value="ECO:0007669"/>
    <property type="project" value="Ensembl"/>
</dbReference>
<dbReference type="GO" id="GO:0000978">
    <property type="term" value="F:RNA polymerase II cis-regulatory region sequence-specific DNA binding"/>
    <property type="evidence" value="ECO:0000314"/>
    <property type="project" value="GO_Central"/>
</dbReference>
<dbReference type="GO" id="GO:1990837">
    <property type="term" value="F:sequence-specific double-stranded DNA binding"/>
    <property type="evidence" value="ECO:0000314"/>
    <property type="project" value="ARUK-UCL"/>
</dbReference>
<dbReference type="GO" id="GO:0010628">
    <property type="term" value="P:positive regulation of gene expression"/>
    <property type="evidence" value="ECO:0007669"/>
    <property type="project" value="Ensembl"/>
</dbReference>
<dbReference type="GO" id="GO:0045944">
    <property type="term" value="P:positive regulation of transcription by RNA polymerase II"/>
    <property type="evidence" value="ECO:0000314"/>
    <property type="project" value="NTNU_SB"/>
</dbReference>
<dbReference type="GO" id="GO:0006357">
    <property type="term" value="P:regulation of transcription by RNA polymerase II"/>
    <property type="evidence" value="ECO:0000318"/>
    <property type="project" value="GO_Central"/>
</dbReference>
<dbReference type="GO" id="GO:0046548">
    <property type="term" value="P:retinal rod cell development"/>
    <property type="evidence" value="ECO:0000318"/>
    <property type="project" value="GO_Central"/>
</dbReference>
<dbReference type="GO" id="GO:0007601">
    <property type="term" value="P:visual perception"/>
    <property type="evidence" value="ECO:0000304"/>
    <property type="project" value="ProtInc"/>
</dbReference>
<dbReference type="CDD" id="cd14718">
    <property type="entry name" value="bZIP_Maf_large"/>
    <property type="match status" value="1"/>
</dbReference>
<dbReference type="FunFam" id="1.20.5.170:FF:000071">
    <property type="entry name" value="Neural retina-specific leucine zipper protein"/>
    <property type="match status" value="1"/>
</dbReference>
<dbReference type="Gene3D" id="1.20.5.170">
    <property type="match status" value="1"/>
</dbReference>
<dbReference type="InterPro" id="IPR004827">
    <property type="entry name" value="bZIP"/>
</dbReference>
<dbReference type="InterPro" id="IPR004826">
    <property type="entry name" value="bZIP_Maf"/>
</dbReference>
<dbReference type="InterPro" id="IPR046347">
    <property type="entry name" value="bZIP_sf"/>
</dbReference>
<dbReference type="InterPro" id="IPR013592">
    <property type="entry name" value="Maf_TF_N"/>
</dbReference>
<dbReference type="InterPro" id="IPR008917">
    <property type="entry name" value="TF_DNA-bd_sf"/>
</dbReference>
<dbReference type="InterPro" id="IPR024874">
    <property type="entry name" value="Transcription_factor_Maf_fam"/>
</dbReference>
<dbReference type="PANTHER" id="PTHR10129:SF24">
    <property type="entry name" value="NEURAL RETINA-SPECIFIC LEUCINE ZIPPER PROTEIN"/>
    <property type="match status" value="1"/>
</dbReference>
<dbReference type="PANTHER" id="PTHR10129">
    <property type="entry name" value="TRANSCRIPTION FACTOR MAF"/>
    <property type="match status" value="1"/>
</dbReference>
<dbReference type="Pfam" id="PF03131">
    <property type="entry name" value="bZIP_Maf"/>
    <property type="match status" value="1"/>
</dbReference>
<dbReference type="Pfam" id="PF08383">
    <property type="entry name" value="Maf_N"/>
    <property type="match status" value="1"/>
</dbReference>
<dbReference type="SMART" id="SM00338">
    <property type="entry name" value="BRLZ"/>
    <property type="match status" value="1"/>
</dbReference>
<dbReference type="SUPFAM" id="SSF47454">
    <property type="entry name" value="A DNA-binding domain in eukaryotic transcription factors"/>
    <property type="match status" value="1"/>
</dbReference>
<dbReference type="SUPFAM" id="SSF57959">
    <property type="entry name" value="Leucine zipper domain"/>
    <property type="match status" value="1"/>
</dbReference>
<dbReference type="PROSITE" id="PS50217">
    <property type="entry name" value="BZIP"/>
    <property type="match status" value="1"/>
</dbReference>